<sequence length="622" mass="68086">MARLVHLTAVLAASIRLAAAATINHDFNVTWVRANPDGAFERPVIGINGKWPIPTIECNLGDRIVINLNNQLGNQSTSLHFHGLFQNGTNHMDGPSGVTQCAVPPGSSVTYNFTVDQPGTYWYHSHNDGQYPDGLRGPLVVHDPEFPYKKEVDEEIVLTLSDWYHDEIQTLIPQFLSKTNPTGAEPVPNACLINDTQNITVSVQPGKTYHVRVINIGAFAGQYLWFEGHKMRIVEVDGVYTKDAEADMIYITAAQRVSFLLTTRNDTNANFPFMASMDKALFDKLPADLNYNSTGWLSYDKSKSYPDPALVDELNPFDDMTLEAYDGMELLPEPDQNVALDVIMKNLGDGVNYAFFGNITYKSPKVPTLYSVLSSGDKATDPAIYGEHTHPFVLKKNEIVQIVVNNLDEGRHPFHLHGHNFQAIYRSNESAGTWEDGGGAAGKTFPKVPMRRDTLLIYPNGNMVLRFKANNPGVWLFHCHIEWHVISGLVATFVEAPMDLQKSLAIPTDHLDACKAGNIPTEGNAAGNTKDLLDLSGQNTPPDPLPAGFTTRGIVALVFSCVTGILGICVVAWYGMSQPLEEATAAVATLVREAQVTGSGTSPNHDDGNAAATEAGVLRRRT</sequence>
<comment type="function">
    <text evidence="1 8">Cell surface ferroxidase; part of the reductive iron assimilatory system (RIA), a siderophore-independent high affinity iron uptake mechanism (PubMed:23658520). Required to oxidize Fe(2+) and release it from the transporter (By similarity).</text>
</comment>
<comment type="subcellular location">
    <subcellularLocation>
        <location evidence="1">Cell membrane</location>
        <topology evidence="1">Single-pass type I membrane protein</topology>
        <orientation evidence="1">Extracellular side</orientation>
    </subcellularLocation>
</comment>
<comment type="induction">
    <text evidence="5">Expression is repressed by iron starvation and up-regulated in the absence of the sidN siderophore synthetase (PubMed:23658520).</text>
</comment>
<comment type="similarity">
    <text evidence="7">Belongs to the multicopper oxidase family.</text>
</comment>
<name>FETC_EPIFE</name>
<feature type="signal peptide" evidence="2">
    <location>
        <begin position="1"/>
        <end position="20"/>
    </location>
</feature>
<feature type="chain" id="PRO_5003909009" description="Iron transport multicopper oxidase fetC" evidence="2">
    <location>
        <begin position="21"/>
        <end position="622"/>
    </location>
</feature>
<feature type="topological domain" description="Extracellular" evidence="2">
    <location>
        <begin position="21"/>
        <end position="552"/>
    </location>
</feature>
<feature type="transmembrane region" description="Helical" evidence="2">
    <location>
        <begin position="553"/>
        <end position="573"/>
    </location>
</feature>
<feature type="topological domain" description="Cytoplasmic" evidence="2">
    <location>
        <begin position="574"/>
        <end position="622"/>
    </location>
</feature>
<feature type="domain" description="Plastocyanin-like 1" evidence="2">
    <location>
        <begin position="29"/>
        <end position="144"/>
    </location>
</feature>
<feature type="domain" description="Plastocyanin-like 2" evidence="2">
    <location>
        <begin position="154"/>
        <end position="301"/>
    </location>
</feature>
<feature type="domain" description="Plastocyanin-like 3" evidence="2">
    <location>
        <begin position="362"/>
        <end position="497"/>
    </location>
</feature>
<feature type="region of interest" description="Disordered" evidence="4">
    <location>
        <begin position="597"/>
        <end position="622"/>
    </location>
</feature>
<feature type="binding site" description="type 2 copper site" evidence="1">
    <location>
        <position position="80"/>
    </location>
    <ligand>
        <name>Cu cation</name>
        <dbReference type="ChEBI" id="CHEBI:23378"/>
        <label>1</label>
    </ligand>
</feature>
<feature type="binding site" description="type 3 copper site" evidence="1">
    <location>
        <position position="82"/>
    </location>
    <ligand>
        <name>Cu cation</name>
        <dbReference type="ChEBI" id="CHEBI:23378"/>
        <label>2</label>
    </ligand>
</feature>
<feature type="binding site" description="type 3 copper site" evidence="1">
    <location>
        <position position="124"/>
    </location>
    <ligand>
        <name>Cu cation</name>
        <dbReference type="ChEBI" id="CHEBI:23378"/>
        <label>2</label>
    </ligand>
</feature>
<feature type="binding site" description="type 3 copper site" evidence="1">
    <location>
        <position position="126"/>
    </location>
    <ligand>
        <name>Cu cation</name>
        <dbReference type="ChEBI" id="CHEBI:23378"/>
        <label>3</label>
    </ligand>
</feature>
<feature type="binding site" description="type 1 copper site" evidence="1">
    <location>
        <position position="412"/>
    </location>
    <ligand>
        <name>Cu cation</name>
        <dbReference type="ChEBI" id="CHEBI:23378"/>
        <label>4</label>
    </ligand>
</feature>
<feature type="binding site" description="type 2 copper site" evidence="1">
    <location>
        <position position="415"/>
    </location>
    <ligand>
        <name>Cu cation</name>
        <dbReference type="ChEBI" id="CHEBI:23378"/>
        <label>1</label>
    </ligand>
</feature>
<feature type="binding site" description="type 3 copper site" evidence="1">
    <location>
        <position position="417"/>
    </location>
    <ligand>
        <name>Cu cation</name>
        <dbReference type="ChEBI" id="CHEBI:23378"/>
        <label>3</label>
    </ligand>
</feature>
<feature type="binding site" description="type 3 copper site" evidence="1">
    <location>
        <position position="478"/>
    </location>
    <ligand>
        <name>Cu cation</name>
        <dbReference type="ChEBI" id="CHEBI:23378"/>
        <label>3</label>
    </ligand>
</feature>
<feature type="binding site" description="type 1 copper site" evidence="1">
    <location>
        <position position="479"/>
    </location>
    <ligand>
        <name>Cu cation</name>
        <dbReference type="ChEBI" id="CHEBI:23378"/>
        <label>4</label>
    </ligand>
</feature>
<feature type="binding site" description="type 3 copper site" evidence="1">
    <location>
        <position position="480"/>
    </location>
    <ligand>
        <name>Cu cation</name>
        <dbReference type="ChEBI" id="CHEBI:23378"/>
        <label>2</label>
    </ligand>
</feature>
<feature type="binding site" description="type 1 copper site" evidence="1">
    <location>
        <position position="484"/>
    </location>
    <ligand>
        <name>Cu cation</name>
        <dbReference type="ChEBI" id="CHEBI:23378"/>
        <label>4</label>
    </ligand>
</feature>
<feature type="glycosylation site" description="N-linked (GlcNAc...) asparagine" evidence="3">
    <location>
        <position position="28"/>
    </location>
</feature>
<feature type="glycosylation site" description="N-linked (GlcNAc...) asparagine" evidence="3">
    <location>
        <position position="74"/>
    </location>
</feature>
<feature type="glycosylation site" description="N-linked (GlcNAc...) asparagine" evidence="3">
    <location>
        <position position="87"/>
    </location>
</feature>
<feature type="glycosylation site" description="N-linked (GlcNAc...) asparagine" evidence="3">
    <location>
        <position position="112"/>
    </location>
</feature>
<feature type="glycosylation site" description="N-linked (GlcNAc...) asparagine" evidence="3">
    <location>
        <position position="194"/>
    </location>
</feature>
<feature type="glycosylation site" description="N-linked (GlcNAc...) asparagine" evidence="3">
    <location>
        <position position="198"/>
    </location>
</feature>
<feature type="glycosylation site" description="N-linked (GlcNAc...) asparagine" evidence="3">
    <location>
        <position position="265"/>
    </location>
</feature>
<feature type="glycosylation site" description="N-linked (GlcNAc...) asparagine" evidence="3">
    <location>
        <position position="292"/>
    </location>
</feature>
<feature type="glycosylation site" description="N-linked (GlcNAc...) asparagine" evidence="3">
    <location>
        <position position="358"/>
    </location>
</feature>
<feature type="glycosylation site" description="N-linked (GlcNAc...) asparagine" evidence="3">
    <location>
        <position position="428"/>
    </location>
</feature>
<dbReference type="EC" id="1.-.-.-" evidence="8"/>
<dbReference type="EMBL" id="JN132406">
    <property type="protein sequence ID" value="AET13878.1"/>
    <property type="molecule type" value="Genomic_DNA"/>
</dbReference>
<dbReference type="SMR" id="K7NCS2"/>
<dbReference type="GlyCosmos" id="K7NCS2">
    <property type="glycosylation" value="10 sites, No reported glycans"/>
</dbReference>
<dbReference type="PhylomeDB" id="K7NCS2"/>
<dbReference type="GO" id="GO:0033573">
    <property type="term" value="C:high-affinity iron permease complex"/>
    <property type="evidence" value="ECO:0007669"/>
    <property type="project" value="TreeGrafter"/>
</dbReference>
<dbReference type="GO" id="GO:0005507">
    <property type="term" value="F:copper ion binding"/>
    <property type="evidence" value="ECO:0007669"/>
    <property type="project" value="InterPro"/>
</dbReference>
<dbReference type="GO" id="GO:0004322">
    <property type="term" value="F:ferroxidase activity"/>
    <property type="evidence" value="ECO:0007669"/>
    <property type="project" value="TreeGrafter"/>
</dbReference>
<dbReference type="GO" id="GO:0010106">
    <property type="term" value="P:cellular response to iron ion starvation"/>
    <property type="evidence" value="ECO:0007669"/>
    <property type="project" value="TreeGrafter"/>
</dbReference>
<dbReference type="GO" id="GO:0033215">
    <property type="term" value="P:reductive iron assimilation"/>
    <property type="evidence" value="ECO:0007669"/>
    <property type="project" value="TreeGrafter"/>
</dbReference>
<dbReference type="CDD" id="cd13851">
    <property type="entry name" value="CuRO_1_Fet3p"/>
    <property type="match status" value="1"/>
</dbReference>
<dbReference type="CDD" id="cd13877">
    <property type="entry name" value="CuRO_2_Fet3p_like"/>
    <property type="match status" value="1"/>
</dbReference>
<dbReference type="CDD" id="cd13899">
    <property type="entry name" value="CuRO_3_Fet3p"/>
    <property type="match status" value="1"/>
</dbReference>
<dbReference type="FunFam" id="2.60.40.420:FF:000022">
    <property type="entry name" value="FET5p Multicopper oxidase"/>
    <property type="match status" value="1"/>
</dbReference>
<dbReference type="FunFam" id="2.60.40.420:FF:000024">
    <property type="entry name" value="FET5p Multicopper oxidase"/>
    <property type="match status" value="1"/>
</dbReference>
<dbReference type="FunFam" id="2.60.40.420:FF:000025">
    <property type="entry name" value="FET5p Multicopper oxidase"/>
    <property type="match status" value="1"/>
</dbReference>
<dbReference type="Gene3D" id="2.60.40.420">
    <property type="entry name" value="Cupredoxins - blue copper proteins"/>
    <property type="match status" value="3"/>
</dbReference>
<dbReference type="InterPro" id="IPR011707">
    <property type="entry name" value="Cu-oxidase-like_N"/>
</dbReference>
<dbReference type="InterPro" id="IPR001117">
    <property type="entry name" value="Cu-oxidase_2nd"/>
</dbReference>
<dbReference type="InterPro" id="IPR011706">
    <property type="entry name" value="Cu-oxidase_C"/>
</dbReference>
<dbReference type="InterPro" id="IPR045087">
    <property type="entry name" value="Cu-oxidase_fam"/>
</dbReference>
<dbReference type="InterPro" id="IPR033138">
    <property type="entry name" value="Cu_oxidase_CS"/>
</dbReference>
<dbReference type="InterPro" id="IPR002355">
    <property type="entry name" value="Cu_oxidase_Cu_BS"/>
</dbReference>
<dbReference type="InterPro" id="IPR008972">
    <property type="entry name" value="Cupredoxin"/>
</dbReference>
<dbReference type="InterPro" id="IPR044130">
    <property type="entry name" value="CuRO_2_Fet3-like"/>
</dbReference>
<dbReference type="PANTHER" id="PTHR11709:SF361">
    <property type="entry name" value="IRON TRANSPORT MULTICOPPER OXIDASE FET3"/>
    <property type="match status" value="1"/>
</dbReference>
<dbReference type="PANTHER" id="PTHR11709">
    <property type="entry name" value="MULTI-COPPER OXIDASE"/>
    <property type="match status" value="1"/>
</dbReference>
<dbReference type="Pfam" id="PF00394">
    <property type="entry name" value="Cu-oxidase"/>
    <property type="match status" value="1"/>
</dbReference>
<dbReference type="Pfam" id="PF07731">
    <property type="entry name" value="Cu-oxidase_2"/>
    <property type="match status" value="1"/>
</dbReference>
<dbReference type="Pfam" id="PF07732">
    <property type="entry name" value="Cu-oxidase_3"/>
    <property type="match status" value="1"/>
</dbReference>
<dbReference type="SUPFAM" id="SSF49503">
    <property type="entry name" value="Cupredoxins"/>
    <property type="match status" value="3"/>
</dbReference>
<dbReference type="PROSITE" id="PS00079">
    <property type="entry name" value="MULTICOPPER_OXIDASE1"/>
    <property type="match status" value="2"/>
</dbReference>
<dbReference type="PROSITE" id="PS00080">
    <property type="entry name" value="MULTICOPPER_OXIDASE2"/>
    <property type="match status" value="1"/>
</dbReference>
<gene>
    <name evidence="6" type="primary">fetC</name>
</gene>
<organism>
    <name type="scientific">Epichloe festucae (strain E2368)</name>
    <dbReference type="NCBI Taxonomy" id="696363"/>
    <lineage>
        <taxon>Eukaryota</taxon>
        <taxon>Fungi</taxon>
        <taxon>Dikarya</taxon>
        <taxon>Ascomycota</taxon>
        <taxon>Pezizomycotina</taxon>
        <taxon>Sordariomycetes</taxon>
        <taxon>Hypocreomycetidae</taxon>
        <taxon>Hypocreales</taxon>
        <taxon>Clavicipitaceae</taxon>
        <taxon>Epichloe</taxon>
    </lineage>
</organism>
<reference key="1">
    <citation type="journal article" date="2013" name="PLoS Pathog.">
        <title>An extracellular siderophore is required to maintain the mutualistic interaction of Epichloe festucae with Lolium perenne.</title>
        <authorList>
            <person name="Johnson L.J."/>
            <person name="Koulman A."/>
            <person name="Christensen M."/>
            <person name="Lane G.A."/>
            <person name="Fraser K."/>
            <person name="Forester N."/>
            <person name="Johnson R.D."/>
            <person name="Bryan G.T."/>
            <person name="Rasmussen S."/>
        </authorList>
    </citation>
    <scope>NUCLEOTIDE SEQUENCE [GENOMIC DNA]</scope>
    <scope>FUNCTION</scope>
    <scope>INDUCTION</scope>
    <source>
        <strain>E2368</strain>
    </source>
</reference>
<protein>
    <recommendedName>
        <fullName evidence="1">Iron transport multicopper oxidase fetC</fullName>
        <ecNumber evidence="8">1.-.-.-</ecNumber>
    </recommendedName>
    <alternativeName>
        <fullName evidence="6">Cell surface ferroxidase fetC</fullName>
    </alternativeName>
</protein>
<keyword id="KW-1003">Cell membrane</keyword>
<keyword id="KW-0186">Copper</keyword>
<keyword id="KW-0325">Glycoprotein</keyword>
<keyword id="KW-0406">Ion transport</keyword>
<keyword id="KW-0408">Iron</keyword>
<keyword id="KW-0410">Iron transport</keyword>
<keyword id="KW-0472">Membrane</keyword>
<keyword id="KW-0479">Metal-binding</keyword>
<keyword id="KW-0560">Oxidoreductase</keyword>
<keyword id="KW-0677">Repeat</keyword>
<keyword id="KW-0732">Signal</keyword>
<keyword id="KW-0812">Transmembrane</keyword>
<keyword id="KW-1133">Transmembrane helix</keyword>
<keyword id="KW-0813">Transport</keyword>
<evidence type="ECO:0000250" key="1">
    <source>
        <dbReference type="UniProtKB" id="P38993"/>
    </source>
</evidence>
<evidence type="ECO:0000255" key="2"/>
<evidence type="ECO:0000255" key="3">
    <source>
        <dbReference type="PROSITE-ProRule" id="PRU00498"/>
    </source>
</evidence>
<evidence type="ECO:0000256" key="4">
    <source>
        <dbReference type="SAM" id="MobiDB-lite"/>
    </source>
</evidence>
<evidence type="ECO:0000269" key="5">
    <source>
    </source>
</evidence>
<evidence type="ECO:0000303" key="6">
    <source>
    </source>
</evidence>
<evidence type="ECO:0000305" key="7"/>
<evidence type="ECO:0000305" key="8">
    <source>
    </source>
</evidence>
<accession>K7NCS2</accession>
<proteinExistence type="evidence at transcript level"/>